<proteinExistence type="evidence at protein level"/>
<name>CP511_ARATH</name>
<organism>
    <name type="scientific">Arabidopsis thaliana</name>
    <name type="common">Mouse-ear cress</name>
    <dbReference type="NCBI Taxonomy" id="3702"/>
    <lineage>
        <taxon>Eukaryota</taxon>
        <taxon>Viridiplantae</taxon>
        <taxon>Streptophyta</taxon>
        <taxon>Embryophyta</taxon>
        <taxon>Tracheophyta</taxon>
        <taxon>Spermatophyta</taxon>
        <taxon>Magnoliopsida</taxon>
        <taxon>eudicotyledons</taxon>
        <taxon>Gunneridae</taxon>
        <taxon>Pentapetalae</taxon>
        <taxon>rosids</taxon>
        <taxon>malvids</taxon>
        <taxon>Brassicales</taxon>
        <taxon>Brassicaceae</taxon>
        <taxon>Camelineae</taxon>
        <taxon>Arabidopsis</taxon>
    </lineage>
</organism>
<dbReference type="EC" id="1.14.14.154" evidence="3 5"/>
<dbReference type="EMBL" id="AB014459">
    <property type="protein sequence ID" value="BAB61873.1"/>
    <property type="molecule type" value="mRNA"/>
</dbReference>
<dbReference type="EMBL" id="AC007296">
    <property type="protein sequence ID" value="AAD30254.1"/>
    <property type="molecule type" value="Genomic_DNA"/>
</dbReference>
<dbReference type="EMBL" id="CP002684">
    <property type="protein sequence ID" value="AEE28769.1"/>
    <property type="molecule type" value="Genomic_DNA"/>
</dbReference>
<dbReference type="EMBL" id="AY050860">
    <property type="protein sequence ID" value="AAK92797.1"/>
    <property type="molecule type" value="mRNA"/>
</dbReference>
<dbReference type="EMBL" id="AF410338">
    <property type="protein sequence ID" value="AAK95324.1"/>
    <property type="molecule type" value="mRNA"/>
</dbReference>
<dbReference type="EMBL" id="AY091203">
    <property type="protein sequence ID" value="AAM14142.1"/>
    <property type="molecule type" value="mRNA"/>
</dbReference>
<dbReference type="EMBL" id="AY084517">
    <property type="protein sequence ID" value="AAM61085.1"/>
    <property type="molecule type" value="mRNA"/>
</dbReference>
<dbReference type="PIR" id="D86250">
    <property type="entry name" value="D86250"/>
</dbReference>
<dbReference type="RefSeq" id="NP_172633.1">
    <property type="nucleotide sequence ID" value="NM_101040.4"/>
</dbReference>
<dbReference type="SMR" id="Q9SAA9"/>
<dbReference type="BioGRID" id="22952">
    <property type="interactions" value="1"/>
</dbReference>
<dbReference type="FunCoup" id="Q9SAA9">
    <property type="interactions" value="3254"/>
</dbReference>
<dbReference type="IntAct" id="Q9SAA9">
    <property type="interactions" value="1"/>
</dbReference>
<dbReference type="STRING" id="3702.Q9SAA9"/>
<dbReference type="PaxDb" id="3702-AT1G11680.1"/>
<dbReference type="ProteomicsDB" id="222700"/>
<dbReference type="EnsemblPlants" id="AT1G11680.1">
    <property type="protein sequence ID" value="AT1G11680.1"/>
    <property type="gene ID" value="AT1G11680"/>
</dbReference>
<dbReference type="GeneID" id="837712"/>
<dbReference type="Gramene" id="AT1G11680.1">
    <property type="protein sequence ID" value="AT1G11680.1"/>
    <property type="gene ID" value="AT1G11680"/>
</dbReference>
<dbReference type="KEGG" id="ath:AT1G11680"/>
<dbReference type="Araport" id="AT1G11680"/>
<dbReference type="TAIR" id="AT1G11680">
    <property type="gene designation" value="CYP51G1"/>
</dbReference>
<dbReference type="eggNOG" id="KOG0684">
    <property type="taxonomic scope" value="Eukaryota"/>
</dbReference>
<dbReference type="HOGENOM" id="CLU_001570_15_0_1"/>
<dbReference type="InParanoid" id="Q9SAA9"/>
<dbReference type="OMA" id="HWFPFVG"/>
<dbReference type="OrthoDB" id="1055148at2759"/>
<dbReference type="PhylomeDB" id="Q9SAA9"/>
<dbReference type="BioCyc" id="MetaCyc:AT1G11680-MONOMER"/>
<dbReference type="PRO" id="PR:Q9SAA9"/>
<dbReference type="Proteomes" id="UP000006548">
    <property type="component" value="Chromosome 1"/>
</dbReference>
<dbReference type="ExpressionAtlas" id="Q9SAA9">
    <property type="expression patterns" value="baseline and differential"/>
</dbReference>
<dbReference type="GO" id="GO:0005783">
    <property type="term" value="C:endoplasmic reticulum"/>
    <property type="evidence" value="ECO:0007005"/>
    <property type="project" value="TAIR"/>
</dbReference>
<dbReference type="GO" id="GO:0005794">
    <property type="term" value="C:Golgi apparatus"/>
    <property type="evidence" value="ECO:0007005"/>
    <property type="project" value="TAIR"/>
</dbReference>
<dbReference type="GO" id="GO:0016020">
    <property type="term" value="C:membrane"/>
    <property type="evidence" value="ECO:0007669"/>
    <property type="project" value="UniProtKB-SubCell"/>
</dbReference>
<dbReference type="GO" id="GO:0020037">
    <property type="term" value="F:heme binding"/>
    <property type="evidence" value="ECO:0007669"/>
    <property type="project" value="InterPro"/>
</dbReference>
<dbReference type="GO" id="GO:0005506">
    <property type="term" value="F:iron ion binding"/>
    <property type="evidence" value="ECO:0007669"/>
    <property type="project" value="InterPro"/>
</dbReference>
<dbReference type="GO" id="GO:0008168">
    <property type="term" value="F:methyltransferase activity"/>
    <property type="evidence" value="ECO:0007669"/>
    <property type="project" value="UniProtKB-KW"/>
</dbReference>
<dbReference type="GO" id="GO:0008398">
    <property type="term" value="F:sterol 14-demethylase activity"/>
    <property type="evidence" value="ECO:0000304"/>
    <property type="project" value="TAIR"/>
</dbReference>
<dbReference type="GO" id="GO:0032259">
    <property type="term" value="P:methylation"/>
    <property type="evidence" value="ECO:0007669"/>
    <property type="project" value="UniProtKB-KW"/>
</dbReference>
<dbReference type="GO" id="GO:0016126">
    <property type="term" value="P:sterol biosynthetic process"/>
    <property type="evidence" value="ECO:0000315"/>
    <property type="project" value="TAIR"/>
</dbReference>
<dbReference type="CDD" id="cd11042">
    <property type="entry name" value="CYP51-like"/>
    <property type="match status" value="1"/>
</dbReference>
<dbReference type="FunFam" id="1.10.630.10:FF:000028">
    <property type="entry name" value="Cytochrome p450 51g1"/>
    <property type="match status" value="1"/>
</dbReference>
<dbReference type="Gene3D" id="1.10.630.10">
    <property type="entry name" value="Cytochrome P450"/>
    <property type="match status" value="1"/>
</dbReference>
<dbReference type="InterPro" id="IPR050529">
    <property type="entry name" value="CYP450_sterol_14alpha_dmase"/>
</dbReference>
<dbReference type="InterPro" id="IPR001128">
    <property type="entry name" value="Cyt_P450"/>
</dbReference>
<dbReference type="InterPro" id="IPR017972">
    <property type="entry name" value="Cyt_P450_CS"/>
</dbReference>
<dbReference type="InterPro" id="IPR002403">
    <property type="entry name" value="Cyt_P450_E_grp-IV"/>
</dbReference>
<dbReference type="InterPro" id="IPR036396">
    <property type="entry name" value="Cyt_P450_sf"/>
</dbReference>
<dbReference type="PANTHER" id="PTHR24304:SF2">
    <property type="entry name" value="24-HYDROXYCHOLESTEROL 7-ALPHA-HYDROXYLASE"/>
    <property type="match status" value="1"/>
</dbReference>
<dbReference type="PANTHER" id="PTHR24304">
    <property type="entry name" value="CYTOCHROME P450 FAMILY 7"/>
    <property type="match status" value="1"/>
</dbReference>
<dbReference type="Pfam" id="PF00067">
    <property type="entry name" value="p450"/>
    <property type="match status" value="1"/>
</dbReference>
<dbReference type="PRINTS" id="PR00465">
    <property type="entry name" value="EP450IV"/>
</dbReference>
<dbReference type="PRINTS" id="PR00385">
    <property type="entry name" value="P450"/>
</dbReference>
<dbReference type="SUPFAM" id="SSF48264">
    <property type="entry name" value="Cytochrome P450"/>
    <property type="match status" value="1"/>
</dbReference>
<dbReference type="PROSITE" id="PS00086">
    <property type="entry name" value="CYTOCHROME_P450"/>
    <property type="match status" value="1"/>
</dbReference>
<keyword id="KW-0349">Heme</keyword>
<keyword id="KW-0408">Iron</keyword>
<keyword id="KW-0444">Lipid biosynthesis</keyword>
<keyword id="KW-0443">Lipid metabolism</keyword>
<keyword id="KW-0472">Membrane</keyword>
<keyword id="KW-0479">Metal-binding</keyword>
<keyword id="KW-0489">Methyltransferase</keyword>
<keyword id="KW-0503">Monooxygenase</keyword>
<keyword id="KW-0560">Oxidoreductase</keyword>
<keyword id="KW-1185">Reference proteome</keyword>
<keyword id="KW-0752">Steroid biosynthesis</keyword>
<keyword id="KW-0753">Steroid metabolism</keyword>
<keyword id="KW-0756">Sterol biosynthesis</keyword>
<keyword id="KW-1207">Sterol metabolism</keyword>
<keyword id="KW-0808">Transferase</keyword>
<keyword id="KW-0812">Transmembrane</keyword>
<keyword id="KW-1133">Transmembrane helix</keyword>
<feature type="chain" id="PRO_0000413010" description="Sterol 14-demethylase">
    <location>
        <begin position="1"/>
        <end position="488"/>
    </location>
</feature>
<feature type="transmembrane region" description="Helical" evidence="2">
    <location>
        <begin position="12"/>
        <end position="32"/>
    </location>
</feature>
<feature type="binding site" description="axial binding residue" evidence="1">
    <location>
        <position position="433"/>
    </location>
    <ligand>
        <name>heme</name>
        <dbReference type="ChEBI" id="CHEBI:30413"/>
    </ligand>
    <ligandPart>
        <name>Fe</name>
        <dbReference type="ChEBI" id="CHEBI:18248"/>
    </ligandPart>
</feature>
<accession>Q9SAA9</accession>
<protein>
    <recommendedName>
        <fullName>Sterol 14-demethylase</fullName>
        <ecNumber evidence="3 5">1.14.14.154</ecNumber>
    </recommendedName>
    <alternativeName>
        <fullName>Cytochrome P450 51A2</fullName>
    </alternativeName>
    <alternativeName>
        <fullName>Cytochrome P450 51G1</fullName>
        <shortName>AtCYP51</shortName>
    </alternativeName>
    <alternativeName>
        <fullName>Obtusifoliol 14-demethylase</fullName>
    </alternativeName>
    <alternativeName>
        <fullName>Protein EMBRYO DEFECTIVE 1738</fullName>
    </alternativeName>
</protein>
<reference key="1">
    <citation type="journal article" date="2001" name="Biochem. Biophys. Res. Commun.">
        <title>Obtusifoliol 14alpha-demethylase (CYP51) antisense Arabidopsis shows slow growth and long life.</title>
        <authorList>
            <person name="Kushiro M."/>
            <person name="Nakano T."/>
            <person name="Sato K."/>
            <person name="Yamagishi K."/>
            <person name="Asami T."/>
            <person name="Nakano A."/>
            <person name="Takatsuto S."/>
            <person name="Fujioka S."/>
            <person name="Ebizuka Y."/>
            <person name="Yoshida S."/>
        </authorList>
    </citation>
    <scope>NUCLEOTIDE SEQUENCE [MRNA]</scope>
    <scope>FUNCTION</scope>
    <scope>CATALYTIC ACTIVITY</scope>
    <source>
        <strain>cv. Columbia</strain>
    </source>
</reference>
<reference key="2">
    <citation type="journal article" date="2000" name="Nature">
        <title>Sequence and analysis of chromosome 1 of the plant Arabidopsis thaliana.</title>
        <authorList>
            <person name="Theologis A."/>
            <person name="Ecker J.R."/>
            <person name="Palm C.J."/>
            <person name="Federspiel N.A."/>
            <person name="Kaul S."/>
            <person name="White O."/>
            <person name="Alonso J."/>
            <person name="Altafi H."/>
            <person name="Araujo R."/>
            <person name="Bowman C.L."/>
            <person name="Brooks S.Y."/>
            <person name="Buehler E."/>
            <person name="Chan A."/>
            <person name="Chao Q."/>
            <person name="Chen H."/>
            <person name="Cheuk R.F."/>
            <person name="Chin C.W."/>
            <person name="Chung M.K."/>
            <person name="Conn L."/>
            <person name="Conway A.B."/>
            <person name="Conway A.R."/>
            <person name="Creasy T.H."/>
            <person name="Dewar K."/>
            <person name="Dunn P."/>
            <person name="Etgu P."/>
            <person name="Feldblyum T.V."/>
            <person name="Feng J.-D."/>
            <person name="Fong B."/>
            <person name="Fujii C.Y."/>
            <person name="Gill J.E."/>
            <person name="Goldsmith A.D."/>
            <person name="Haas B."/>
            <person name="Hansen N.F."/>
            <person name="Hughes B."/>
            <person name="Huizar L."/>
            <person name="Hunter J.L."/>
            <person name="Jenkins J."/>
            <person name="Johnson-Hopson C."/>
            <person name="Khan S."/>
            <person name="Khaykin E."/>
            <person name="Kim C.J."/>
            <person name="Koo H.L."/>
            <person name="Kremenetskaia I."/>
            <person name="Kurtz D.B."/>
            <person name="Kwan A."/>
            <person name="Lam B."/>
            <person name="Langin-Hooper S."/>
            <person name="Lee A."/>
            <person name="Lee J.M."/>
            <person name="Lenz C.A."/>
            <person name="Li J.H."/>
            <person name="Li Y.-P."/>
            <person name="Lin X."/>
            <person name="Liu S.X."/>
            <person name="Liu Z.A."/>
            <person name="Luros J.S."/>
            <person name="Maiti R."/>
            <person name="Marziali A."/>
            <person name="Militscher J."/>
            <person name="Miranda M."/>
            <person name="Nguyen M."/>
            <person name="Nierman W.C."/>
            <person name="Osborne B.I."/>
            <person name="Pai G."/>
            <person name="Peterson J."/>
            <person name="Pham P.K."/>
            <person name="Rizzo M."/>
            <person name="Rooney T."/>
            <person name="Rowley D."/>
            <person name="Sakano H."/>
            <person name="Salzberg S.L."/>
            <person name="Schwartz J.R."/>
            <person name="Shinn P."/>
            <person name="Southwick A.M."/>
            <person name="Sun H."/>
            <person name="Tallon L.J."/>
            <person name="Tambunga G."/>
            <person name="Toriumi M.J."/>
            <person name="Town C.D."/>
            <person name="Utterback T."/>
            <person name="Van Aken S."/>
            <person name="Vaysberg M."/>
            <person name="Vysotskaia V.S."/>
            <person name="Walker M."/>
            <person name="Wu D."/>
            <person name="Yu G."/>
            <person name="Fraser C.M."/>
            <person name="Venter J.C."/>
            <person name="Davis R.W."/>
        </authorList>
    </citation>
    <scope>NUCLEOTIDE SEQUENCE [LARGE SCALE GENOMIC DNA]</scope>
    <source>
        <strain>cv. Columbia</strain>
    </source>
</reference>
<reference key="3">
    <citation type="journal article" date="2017" name="Plant J.">
        <title>Araport11: a complete reannotation of the Arabidopsis thaliana reference genome.</title>
        <authorList>
            <person name="Cheng C.Y."/>
            <person name="Krishnakumar V."/>
            <person name="Chan A.P."/>
            <person name="Thibaud-Nissen F."/>
            <person name="Schobel S."/>
            <person name="Town C.D."/>
        </authorList>
    </citation>
    <scope>GENOME REANNOTATION</scope>
    <source>
        <strain>cv. Columbia</strain>
    </source>
</reference>
<reference key="4">
    <citation type="journal article" date="2003" name="Science">
        <title>Empirical analysis of transcriptional activity in the Arabidopsis genome.</title>
        <authorList>
            <person name="Yamada K."/>
            <person name="Lim J."/>
            <person name="Dale J.M."/>
            <person name="Chen H."/>
            <person name="Shinn P."/>
            <person name="Palm C.J."/>
            <person name="Southwick A.M."/>
            <person name="Wu H.C."/>
            <person name="Kim C.J."/>
            <person name="Nguyen M."/>
            <person name="Pham P.K."/>
            <person name="Cheuk R.F."/>
            <person name="Karlin-Newmann G."/>
            <person name="Liu S.X."/>
            <person name="Lam B."/>
            <person name="Sakano H."/>
            <person name="Wu T."/>
            <person name="Yu G."/>
            <person name="Miranda M."/>
            <person name="Quach H.L."/>
            <person name="Tripp M."/>
            <person name="Chang C.H."/>
            <person name="Lee J.M."/>
            <person name="Toriumi M.J."/>
            <person name="Chan M.M."/>
            <person name="Tang C.C."/>
            <person name="Onodera C.S."/>
            <person name="Deng J.M."/>
            <person name="Akiyama K."/>
            <person name="Ansari Y."/>
            <person name="Arakawa T."/>
            <person name="Banh J."/>
            <person name="Banno F."/>
            <person name="Bowser L."/>
            <person name="Brooks S.Y."/>
            <person name="Carninci P."/>
            <person name="Chao Q."/>
            <person name="Choy N."/>
            <person name="Enju A."/>
            <person name="Goldsmith A.D."/>
            <person name="Gurjal M."/>
            <person name="Hansen N.F."/>
            <person name="Hayashizaki Y."/>
            <person name="Johnson-Hopson C."/>
            <person name="Hsuan V.W."/>
            <person name="Iida K."/>
            <person name="Karnes M."/>
            <person name="Khan S."/>
            <person name="Koesema E."/>
            <person name="Ishida J."/>
            <person name="Jiang P.X."/>
            <person name="Jones T."/>
            <person name="Kawai J."/>
            <person name="Kamiya A."/>
            <person name="Meyers C."/>
            <person name="Nakajima M."/>
            <person name="Narusaka M."/>
            <person name="Seki M."/>
            <person name="Sakurai T."/>
            <person name="Satou M."/>
            <person name="Tamse R."/>
            <person name="Vaysberg M."/>
            <person name="Wallender E.K."/>
            <person name="Wong C."/>
            <person name="Yamamura Y."/>
            <person name="Yuan S."/>
            <person name="Shinozaki K."/>
            <person name="Davis R.W."/>
            <person name="Theologis A."/>
            <person name="Ecker J.R."/>
        </authorList>
    </citation>
    <scope>NUCLEOTIDE SEQUENCE [LARGE SCALE MRNA]</scope>
    <source>
        <strain>cv. Columbia</strain>
    </source>
</reference>
<reference key="5">
    <citation type="submission" date="2002-03" db="EMBL/GenBank/DDBJ databases">
        <title>Full-length cDNA from Arabidopsis thaliana.</title>
        <authorList>
            <person name="Brover V.V."/>
            <person name="Troukhan M.E."/>
            <person name="Alexandrov N.A."/>
            <person name="Lu Y.-P."/>
            <person name="Flavell R.B."/>
            <person name="Feldmann K.A."/>
        </authorList>
    </citation>
    <scope>NUCLEOTIDE SEQUENCE [LARGE SCALE MRNA]</scope>
</reference>
<reference key="6">
    <citation type="journal article" date="2004" name="Plant Physiol.">
        <title>Identification of genes required for embryo development in Arabidopsis.</title>
        <authorList>
            <person name="Tzafrir I."/>
            <person name="Pena-Muralla R."/>
            <person name="Dickerman A."/>
            <person name="Berg M."/>
            <person name="Rogers R."/>
            <person name="Hutchens S."/>
            <person name="Sweeney T.C."/>
            <person name="McElver J."/>
            <person name="Aux G."/>
            <person name="Patton D."/>
            <person name="Meinke D."/>
        </authorList>
    </citation>
    <scope>IDENTIFICATION</scope>
    <scope>DISRUPTION PHENOTYPE</scope>
</reference>
<reference key="7">
    <citation type="journal article" date="2005" name="Plant Physiol.">
        <title>Arabidopsis cyp51 mutant shows postembryonic seedling lethality associated with lack of membrane integrity.</title>
        <authorList>
            <person name="Kim H.B."/>
            <person name="Schaller H."/>
            <person name="Goh C.H."/>
            <person name="Kwon M."/>
            <person name="Choe S."/>
            <person name="An C.S."/>
            <person name="Durst F."/>
            <person name="Feldmann K.A."/>
            <person name="Feyereisen R."/>
        </authorList>
    </citation>
    <scope>FUNCTION</scope>
    <scope>CATALYTIC ACTIVITY</scope>
    <scope>TISSUE SPECIFICITY</scope>
    <scope>DISRUPTION PHENOTYPE</scope>
</reference>
<reference key="8">
    <citation type="journal article" date="2005" name="Plant Physiol.">
        <title>Lipid signaling in plants. Cloning and expression analysis of the obtusifoliol 14alpha-demethylase from Solanum chacoense Bitt., a pollination- and fertilization-induced gene with both obtusifoliol and lanosterol demethylase activity.</title>
        <authorList>
            <person name="O'Brien M."/>
            <person name="Chantha S.C."/>
            <person name="Rahier A."/>
            <person name="Matton D.P."/>
        </authorList>
    </citation>
    <scope>FUNCTION</scope>
    <scope>DISRUPTION PHENOTYPE</scope>
</reference>
<evidence type="ECO:0000250" key="1"/>
<evidence type="ECO:0000255" key="2"/>
<evidence type="ECO:0000269" key="3">
    <source>
    </source>
</evidence>
<evidence type="ECO:0000269" key="4">
    <source>
    </source>
</evidence>
<evidence type="ECO:0000269" key="5">
    <source>
    </source>
</evidence>
<evidence type="ECO:0000269" key="6">
    <source>
    </source>
</evidence>
<evidence type="ECO:0000305" key="7"/>
<gene>
    <name type="primary">CYP51G1</name>
    <name type="synonym">CYP51A2</name>
    <name type="synonym">EMB1738</name>
    <name type="ordered locus">At1g11680</name>
    <name type="ORF">F25C20.17</name>
</gene>
<sequence length="488" mass="55495">MELDSENKLLKTGLVIVATLVIAKLIFSFFTSDSKKKRLPPTLKAWPPLVGSLIKFLKGPIIMLREEYPKLGSVFTVNLVHKKITFLIGPEVSAHFFKASESDLSQQEVYQFNVPTFGPGVVFDVDYSVRQEQFRFFTEALRVNKLKGYVDMMVTEAEDYFSKWGESGEVDIKVELERLIILTASRCLLGREVRDQLFDDVSALFHDLDNGMLPISVLFPYLPIPAHRRRDRAREKLSEIFAKIIGSRKRSGKTENDMLQCFIESKYKDGRQTTESEVTGLLIAALFAGQHTSSITSTWTGAYLMRYKEYFSAALDEQKNLIAKHGDKIDHDILSEMDVLYRCIKEALRLHPPLIMLMRASHSDFSVTARDGKTYDIPKGHIVATSPAFANRLPHIFKDPDTYDPERFSPGREEDKAAGAFSYIAFGGGRHGCLGEPFAYLQIKAIWSHLLRNFELELVSPFPEIDWNAMVVGVKGNVMVRYKRRQLS</sequence>
<comment type="function">
    <text evidence="3 5 6">Involved in sterol biosynthesis. Catalyzes the 14-alpha demethylation of obtusifoliol to 4 alpha-methyl-5 alpha-ergosta-8,14,24(28)-trien-3 beta-ol.</text>
</comment>
<comment type="catalytic activity">
    <reaction evidence="3 5">
        <text>a 14alpha-methyl steroid + 3 reduced [NADPH--hemoprotein reductase] + 3 O2 = a Delta(14) steroid + formate + 3 oxidized [NADPH--hemoprotein reductase] + 4 H2O + 4 H(+)</text>
        <dbReference type="Rhea" id="RHEA:54028"/>
        <dbReference type="Rhea" id="RHEA-COMP:11964"/>
        <dbReference type="Rhea" id="RHEA-COMP:11965"/>
        <dbReference type="ChEBI" id="CHEBI:15377"/>
        <dbReference type="ChEBI" id="CHEBI:15378"/>
        <dbReference type="ChEBI" id="CHEBI:15379"/>
        <dbReference type="ChEBI" id="CHEBI:15740"/>
        <dbReference type="ChEBI" id="CHEBI:57618"/>
        <dbReference type="ChEBI" id="CHEBI:58210"/>
        <dbReference type="ChEBI" id="CHEBI:138029"/>
        <dbReference type="ChEBI" id="CHEBI:138031"/>
        <dbReference type="EC" id="1.14.14.154"/>
    </reaction>
</comment>
<comment type="cofactor">
    <cofactor>
        <name>heme</name>
        <dbReference type="ChEBI" id="CHEBI:30413"/>
    </cofactor>
</comment>
<comment type="subcellular location">
    <subcellularLocation>
        <location evidence="7">Membrane</location>
        <topology evidence="7">Single-pass membrane protein</topology>
    </subcellularLocation>
</comment>
<comment type="tissue specificity">
    <text evidence="5">Expressed in leaves, roots, stems, siliques, flowers, flower buds and seedlings.</text>
</comment>
<comment type="disruption phenotype">
    <text evidence="4 5 6">Lack of membrane integrity. Seedling lethality.</text>
</comment>
<comment type="miscellaneous">
    <text>Decreased expression of CYP51G1 by antisense leads to a semidwarf phenotype in the early growth stage and a longer life span. Disruption mutants accumulate obtusifoliol and 14-alpha-methyl-sterols and cannot be rescued by exogenous application of brassinosteroids.</text>
</comment>
<comment type="similarity">
    <text evidence="7">Belongs to the cytochrome P450 family.</text>
</comment>